<feature type="chain" id="PRO_0000237326" description="DNA-directed RNA polymerase subunit beta">
    <location>
        <begin position="1"/>
        <end position="1070"/>
    </location>
</feature>
<protein>
    <recommendedName>
        <fullName evidence="1">DNA-directed RNA polymerase subunit beta</fullName>
        <ecNumber evidence="1">2.7.7.6</ecNumber>
    </recommendedName>
    <alternativeName>
        <fullName evidence="1">PEP</fullName>
    </alternativeName>
    <alternativeName>
        <fullName evidence="1">Plastid-encoded RNA polymerase subunit beta</fullName>
        <shortName evidence="1">RNA polymerase subunit beta</shortName>
    </alternativeName>
</protein>
<proteinExistence type="inferred from homology"/>
<accession>Q2MIA8</accession>
<comment type="function">
    <text evidence="1">DNA-dependent RNA polymerase catalyzes the transcription of DNA into RNA using the four ribonucleoside triphosphates as substrates.</text>
</comment>
<comment type="catalytic activity">
    <reaction evidence="1">
        <text>RNA(n) + a ribonucleoside 5'-triphosphate = RNA(n+1) + diphosphate</text>
        <dbReference type="Rhea" id="RHEA:21248"/>
        <dbReference type="Rhea" id="RHEA-COMP:14527"/>
        <dbReference type="Rhea" id="RHEA-COMP:17342"/>
        <dbReference type="ChEBI" id="CHEBI:33019"/>
        <dbReference type="ChEBI" id="CHEBI:61557"/>
        <dbReference type="ChEBI" id="CHEBI:140395"/>
        <dbReference type="EC" id="2.7.7.6"/>
    </reaction>
</comment>
<comment type="subunit">
    <text evidence="1">In plastids the minimal PEP RNA polymerase catalytic core is composed of four subunits: alpha, beta, beta', and beta''. When a (nuclear-encoded) sigma factor is associated with the core the holoenzyme is formed, which can initiate transcription.</text>
</comment>
<comment type="subcellular location">
    <subcellularLocation>
        <location>Plastid</location>
        <location>Chloroplast</location>
    </subcellularLocation>
</comment>
<comment type="similarity">
    <text evidence="1">Belongs to the RNA polymerase beta chain family.</text>
</comment>
<organism>
    <name type="scientific">Solanum lycopersicum</name>
    <name type="common">Tomato</name>
    <name type="synonym">Lycopersicon esculentum</name>
    <dbReference type="NCBI Taxonomy" id="4081"/>
    <lineage>
        <taxon>Eukaryota</taxon>
        <taxon>Viridiplantae</taxon>
        <taxon>Streptophyta</taxon>
        <taxon>Embryophyta</taxon>
        <taxon>Tracheophyta</taxon>
        <taxon>Spermatophyta</taxon>
        <taxon>Magnoliopsida</taxon>
        <taxon>eudicotyledons</taxon>
        <taxon>Gunneridae</taxon>
        <taxon>Pentapetalae</taxon>
        <taxon>asterids</taxon>
        <taxon>lamiids</taxon>
        <taxon>Solanales</taxon>
        <taxon>Solanaceae</taxon>
        <taxon>Solanoideae</taxon>
        <taxon>Solaneae</taxon>
        <taxon>Solanum</taxon>
        <taxon>Solanum subgen. Lycopersicon</taxon>
    </lineage>
</organism>
<keyword id="KW-0150">Chloroplast</keyword>
<keyword id="KW-0240">DNA-directed RNA polymerase</keyword>
<keyword id="KW-0548">Nucleotidyltransferase</keyword>
<keyword id="KW-0934">Plastid</keyword>
<keyword id="KW-1185">Reference proteome</keyword>
<keyword id="KW-0804">Transcription</keyword>
<keyword id="KW-0808">Transferase</keyword>
<dbReference type="EC" id="2.7.7.6" evidence="1"/>
<dbReference type="EMBL" id="DQ347959">
    <property type="protein sequence ID" value="ABC56292.1"/>
    <property type="molecule type" value="Genomic_DNA"/>
</dbReference>
<dbReference type="EMBL" id="AM087200">
    <property type="protein sequence ID" value="CAJ32385.1"/>
    <property type="molecule type" value="Genomic_DNA"/>
</dbReference>
<dbReference type="RefSeq" id="AP_004920.1">
    <property type="nucleotide sequence ID" value="AC_000188.1"/>
</dbReference>
<dbReference type="RefSeq" id="YP_008563080.1">
    <property type="nucleotide sequence ID" value="NC_007898.3"/>
</dbReference>
<dbReference type="SMR" id="Q2MIA8"/>
<dbReference type="FunCoup" id="Q2MIA8">
    <property type="interactions" value="218"/>
</dbReference>
<dbReference type="STRING" id="4081.Q2MIA8"/>
<dbReference type="PaxDb" id="4081-Solyc12g037940.1.1"/>
<dbReference type="GeneID" id="3950478"/>
<dbReference type="KEGG" id="sly:3950478"/>
<dbReference type="eggNOG" id="KOG0214">
    <property type="taxonomic scope" value="Eukaryota"/>
</dbReference>
<dbReference type="InParanoid" id="Q2MIA8"/>
<dbReference type="OrthoDB" id="1678757at2759"/>
<dbReference type="Proteomes" id="UP000004994">
    <property type="component" value="Chloroplast"/>
</dbReference>
<dbReference type="ExpressionAtlas" id="Q2MIA8">
    <property type="expression patterns" value="baseline and differential"/>
</dbReference>
<dbReference type="GO" id="GO:0009507">
    <property type="term" value="C:chloroplast"/>
    <property type="evidence" value="ECO:0007669"/>
    <property type="project" value="UniProtKB-SubCell"/>
</dbReference>
<dbReference type="GO" id="GO:0000428">
    <property type="term" value="C:DNA-directed RNA polymerase complex"/>
    <property type="evidence" value="ECO:0007669"/>
    <property type="project" value="UniProtKB-KW"/>
</dbReference>
<dbReference type="GO" id="GO:0005739">
    <property type="term" value="C:mitochondrion"/>
    <property type="evidence" value="ECO:0007669"/>
    <property type="project" value="GOC"/>
</dbReference>
<dbReference type="GO" id="GO:0003677">
    <property type="term" value="F:DNA binding"/>
    <property type="evidence" value="ECO:0007669"/>
    <property type="project" value="UniProtKB-UniRule"/>
</dbReference>
<dbReference type="GO" id="GO:0003899">
    <property type="term" value="F:DNA-directed RNA polymerase activity"/>
    <property type="evidence" value="ECO:0007669"/>
    <property type="project" value="UniProtKB-UniRule"/>
</dbReference>
<dbReference type="GO" id="GO:0032549">
    <property type="term" value="F:ribonucleoside binding"/>
    <property type="evidence" value="ECO:0007669"/>
    <property type="project" value="InterPro"/>
</dbReference>
<dbReference type="GO" id="GO:0006351">
    <property type="term" value="P:DNA-templated transcription"/>
    <property type="evidence" value="ECO:0007669"/>
    <property type="project" value="UniProtKB-UniRule"/>
</dbReference>
<dbReference type="CDD" id="cd00653">
    <property type="entry name" value="RNA_pol_B_RPB2"/>
    <property type="match status" value="1"/>
</dbReference>
<dbReference type="FunFam" id="3.90.1110.10:FF:000009">
    <property type="entry name" value="DNA-directed RNA polymerase subunit beta"/>
    <property type="match status" value="1"/>
</dbReference>
<dbReference type="Gene3D" id="2.40.50.100">
    <property type="match status" value="1"/>
</dbReference>
<dbReference type="Gene3D" id="2.40.50.150">
    <property type="match status" value="1"/>
</dbReference>
<dbReference type="Gene3D" id="3.90.1100.10">
    <property type="match status" value="1"/>
</dbReference>
<dbReference type="Gene3D" id="2.30.150.10">
    <property type="entry name" value="DNA-directed RNA polymerase, beta subunit, external 1 domain"/>
    <property type="match status" value="1"/>
</dbReference>
<dbReference type="Gene3D" id="2.40.270.10">
    <property type="entry name" value="DNA-directed RNA polymerase, subunit 2, domain 6"/>
    <property type="match status" value="1"/>
</dbReference>
<dbReference type="Gene3D" id="3.90.1800.10">
    <property type="entry name" value="RNA polymerase alpha subunit dimerisation domain"/>
    <property type="match status" value="1"/>
</dbReference>
<dbReference type="Gene3D" id="3.90.1110.10">
    <property type="entry name" value="RNA polymerase Rpb2, domain 2"/>
    <property type="match status" value="1"/>
</dbReference>
<dbReference type="HAMAP" id="MF_01321">
    <property type="entry name" value="RNApol_bact_RpoB"/>
    <property type="match status" value="1"/>
</dbReference>
<dbReference type="InterPro" id="IPR042107">
    <property type="entry name" value="DNA-dir_RNA_pol_bsu_ext_1_sf"/>
</dbReference>
<dbReference type="InterPro" id="IPR015712">
    <property type="entry name" value="DNA-dir_RNA_pol_su2"/>
</dbReference>
<dbReference type="InterPro" id="IPR007120">
    <property type="entry name" value="DNA-dir_RNAP_su2_dom"/>
</dbReference>
<dbReference type="InterPro" id="IPR037033">
    <property type="entry name" value="DNA-dir_RNAP_su2_hyb_sf"/>
</dbReference>
<dbReference type="InterPro" id="IPR010243">
    <property type="entry name" value="RNA_pol_bsu_bac"/>
</dbReference>
<dbReference type="InterPro" id="IPR007121">
    <property type="entry name" value="RNA_pol_bsu_CS"/>
</dbReference>
<dbReference type="InterPro" id="IPR007642">
    <property type="entry name" value="RNA_pol_Rpb2_2"/>
</dbReference>
<dbReference type="InterPro" id="IPR037034">
    <property type="entry name" value="RNA_pol_Rpb2_2_sf"/>
</dbReference>
<dbReference type="InterPro" id="IPR007645">
    <property type="entry name" value="RNA_pol_Rpb2_3"/>
</dbReference>
<dbReference type="InterPro" id="IPR007641">
    <property type="entry name" value="RNA_pol_Rpb2_7"/>
</dbReference>
<dbReference type="InterPro" id="IPR014724">
    <property type="entry name" value="RNA_pol_RPB2_OB-fold"/>
</dbReference>
<dbReference type="NCBIfam" id="NF001616">
    <property type="entry name" value="PRK00405.1"/>
    <property type="match status" value="1"/>
</dbReference>
<dbReference type="PANTHER" id="PTHR20856">
    <property type="entry name" value="DNA-DIRECTED RNA POLYMERASE I SUBUNIT 2"/>
    <property type="match status" value="1"/>
</dbReference>
<dbReference type="Pfam" id="PF04561">
    <property type="entry name" value="RNA_pol_Rpb2_2"/>
    <property type="match status" value="1"/>
</dbReference>
<dbReference type="Pfam" id="PF04565">
    <property type="entry name" value="RNA_pol_Rpb2_3"/>
    <property type="match status" value="1"/>
</dbReference>
<dbReference type="Pfam" id="PF00562">
    <property type="entry name" value="RNA_pol_Rpb2_6"/>
    <property type="match status" value="1"/>
</dbReference>
<dbReference type="Pfam" id="PF04560">
    <property type="entry name" value="RNA_pol_Rpb2_7"/>
    <property type="match status" value="1"/>
</dbReference>
<dbReference type="SUPFAM" id="SSF64484">
    <property type="entry name" value="beta and beta-prime subunits of DNA dependent RNA-polymerase"/>
    <property type="match status" value="1"/>
</dbReference>
<dbReference type="PROSITE" id="PS01166">
    <property type="entry name" value="RNA_POL_BETA"/>
    <property type="match status" value="1"/>
</dbReference>
<gene>
    <name evidence="1" type="primary">rpoB</name>
</gene>
<name>RPOB_SOLLC</name>
<evidence type="ECO:0000255" key="1">
    <source>
        <dbReference type="HAMAP-Rule" id="MF_01321"/>
    </source>
</evidence>
<geneLocation type="chloroplast"/>
<sequence length="1070" mass="120628">MLGDGNEGISTIPGFNQIQFEGFCRFIDQGLTEELYKFPKIEDTDQEIEFQLFVETYQLVEPLIKERDAVYESLTYSSELYVSAGLIWKNSRDMQEQTIFIGNIPLMNSLGTSIVNGIYRIVINQILQSPGIYYRSELDHNGISVYTGTIISDWGGRSELEIDRKARIWARVSRKQKISILVLSSAMGLNLREILENVCYPEIFLSFLNDKERKKIGSKENSILEFYQQFACVGGDPVFSESLCKELQKKFFQQRCELGRIGRRNMNRKLNLDIPQNNTFLLPRDILAAADHLIGLKFGMGALDDMNHLKNKRIRSVADLLQDQFGLALVRLENVVRGTICGAIRHKLIPTPQNLVTSPPLTTTYESFFGLHPLSQVLDRTNPLTQIVHGRKLSYLGPGGLTGRTASFRIRDIHPSHYGRICPIDTSEGINVGLIGSLSIHARIGHWGSLESPFYEISERSTGVRMLYLSPGSDEYYMVAAGNSLALNRDIQEEQVVPARYRQEFLTIAWEQVHLRSIFPFQYFSIGASLIPFIEHNDANRALMSSNMQRQAVPLSRSEKCIVGTGLERQAALDSGALAIAEREGRIVYTNTHKILLAGNGDILSIPLVIYQRSNKNTCMHQKFRVPRGKCIKKGQILADGAATVGGELALGKNVLVAYMPWEGYNSEDAVLISERLVYEDIYTSFHIRKYEIHTHVTSQGPEKVTNEIPHLEAHLLRNLDKKGIVMLGSWVETGDILVGKLTPQVVKESSYAPEDRLLRAILGIQVSTSKETCLKLPIGGRGRVIDVRWIQKRGGSSYNPETIRVYISQKREIKVGDKVAGRHGNKGIISKILPRQDMPYLQDGRSVDMVFNPLGVPSRMNVGQIFECSLGLAGSLLDRHYRIAPFDERYEQEASRKLVFSELYEASKQTANPWVFEPEYPGKSRIFDGRTGNPFEQPVIIGKPYILKLIHQVDDKIHGRSSGHYALVTQQPLRGRAKQGGQRVGEMEVWALEGFGVAHILQEMLTYKSDHIRARQEVLGTTIIGGTIPNPEDAPESFRLLVRELRSLALELNHFLVSEKNFQINRKEA</sequence>
<reference key="1">
    <citation type="journal article" date="2006" name="Theor. Appl. Genet.">
        <title>Complete chloroplast genome sequences of Solanum bulbocastanum, Solanum lycopersicum and comparative analyses with other Solanaceae genomes.</title>
        <authorList>
            <person name="Daniell H."/>
            <person name="Lee S.-B."/>
            <person name="Grevich J."/>
            <person name="Saski C."/>
            <person name="Quesada-Vargas T."/>
            <person name="Guda C."/>
            <person name="Tomkins J."/>
            <person name="Jansen R.K."/>
        </authorList>
    </citation>
    <scope>NUCLEOTIDE SEQUENCE [LARGE SCALE GENOMIC DNA]</scope>
    <source>
        <strain>cv. LA3023</strain>
    </source>
</reference>
<reference key="2">
    <citation type="journal article" date="2006" name="J. Mol. Evol.">
        <title>Sequence of the tomato chloroplast DNA and evolutionary comparison of solanaceous plastid genomes.</title>
        <authorList>
            <person name="Kahlau S."/>
            <person name="Aspinall S."/>
            <person name="Gray J.C."/>
            <person name="Bock R."/>
        </authorList>
    </citation>
    <scope>NUCLEOTIDE SEQUENCE [LARGE SCALE GENOMIC DNA]</scope>
    <source>
        <strain>cv. IPA-6</strain>
    </source>
</reference>